<sequence>MSSTLIVQLDMRTLCQEADITADYVVEIVEHGIVEPSGRTPEEWLFDDQAPLLARRAAKLHQELELEWEGVALALELLQEVQQLRSENSMLKQRLGRFTQM</sequence>
<feature type="chain" id="PRO_1000137774" description="Chaperone modulatory protein CbpM">
    <location>
        <begin position="1"/>
        <end position="101"/>
    </location>
</feature>
<gene>
    <name evidence="1" type="primary">cbpM</name>
    <name type="ordered locus">PputW619_4639</name>
</gene>
<proteinExistence type="inferred from homology"/>
<name>CBPM_PSEPW</name>
<evidence type="ECO:0000255" key="1">
    <source>
        <dbReference type="HAMAP-Rule" id="MF_01155"/>
    </source>
</evidence>
<comment type="function">
    <text evidence="1">Interacts with CbpA and inhibits both the DnaJ-like co-chaperone activity and the DNA binding activity of CbpA. Together with CbpA, modulates the activity of the DnaK chaperone system. Does not inhibit the co-chaperone activity of DnaJ.</text>
</comment>
<comment type="similarity">
    <text evidence="1">Belongs to the CbpM family.</text>
</comment>
<protein>
    <recommendedName>
        <fullName evidence="1">Chaperone modulatory protein CbpM</fullName>
    </recommendedName>
</protein>
<reference key="1">
    <citation type="submission" date="2008-02" db="EMBL/GenBank/DDBJ databases">
        <title>Complete sequence of Pseudomonas putida W619.</title>
        <authorList>
            <person name="Copeland A."/>
            <person name="Lucas S."/>
            <person name="Lapidus A."/>
            <person name="Barry K."/>
            <person name="Detter J.C."/>
            <person name="Glavina del Rio T."/>
            <person name="Dalin E."/>
            <person name="Tice H."/>
            <person name="Pitluck S."/>
            <person name="Chain P."/>
            <person name="Malfatti S."/>
            <person name="Shin M."/>
            <person name="Vergez L."/>
            <person name="Schmutz J."/>
            <person name="Larimer F."/>
            <person name="Land M."/>
            <person name="Hauser L."/>
            <person name="Kyrpides N."/>
            <person name="Kim E."/>
            <person name="Taghavi S."/>
            <person name="Vangronsveld D."/>
            <person name="van der Lelie D."/>
            <person name="Richardson P."/>
        </authorList>
    </citation>
    <scope>NUCLEOTIDE SEQUENCE [LARGE SCALE GENOMIC DNA]</scope>
    <source>
        <strain>W619</strain>
    </source>
</reference>
<accession>B1J5W6</accession>
<organism>
    <name type="scientific">Pseudomonas putida (strain W619)</name>
    <dbReference type="NCBI Taxonomy" id="390235"/>
    <lineage>
        <taxon>Bacteria</taxon>
        <taxon>Pseudomonadati</taxon>
        <taxon>Pseudomonadota</taxon>
        <taxon>Gammaproteobacteria</taxon>
        <taxon>Pseudomonadales</taxon>
        <taxon>Pseudomonadaceae</taxon>
        <taxon>Pseudomonas</taxon>
    </lineage>
</organism>
<dbReference type="EMBL" id="CP000949">
    <property type="protein sequence ID" value="ACA75119.1"/>
    <property type="molecule type" value="Genomic_DNA"/>
</dbReference>
<dbReference type="SMR" id="B1J5W6"/>
<dbReference type="STRING" id="390235.PputW619_4639"/>
<dbReference type="KEGG" id="ppw:PputW619_4639"/>
<dbReference type="eggNOG" id="COG0789">
    <property type="taxonomic scope" value="Bacteria"/>
</dbReference>
<dbReference type="HOGENOM" id="CLU_144710_3_1_6"/>
<dbReference type="OrthoDB" id="5567704at2"/>
<dbReference type="Gene3D" id="1.10.1660.10">
    <property type="match status" value="1"/>
</dbReference>
<dbReference type="HAMAP" id="MF_01155">
    <property type="entry name" value="CbpM"/>
    <property type="match status" value="1"/>
</dbReference>
<dbReference type="InterPro" id="IPR022835">
    <property type="entry name" value="CbpM"/>
</dbReference>
<dbReference type="Pfam" id="PF13591">
    <property type="entry name" value="MerR_2"/>
    <property type="match status" value="1"/>
</dbReference>